<organism>
    <name type="scientific">Vibrio vulnificus (strain YJ016)</name>
    <dbReference type="NCBI Taxonomy" id="196600"/>
    <lineage>
        <taxon>Bacteria</taxon>
        <taxon>Pseudomonadati</taxon>
        <taxon>Pseudomonadota</taxon>
        <taxon>Gammaproteobacteria</taxon>
        <taxon>Vibrionales</taxon>
        <taxon>Vibrionaceae</taxon>
        <taxon>Vibrio</taxon>
    </lineage>
</organism>
<accession>Q7MLS1</accession>
<protein>
    <recommendedName>
        <fullName>Imidazole glycerol phosphate synthase subunit hisF1</fullName>
        <ecNumber>4.3.2.10</ecNumber>
    </recommendedName>
    <alternativeName>
        <fullName>IGP synthase cyclase subunit</fullName>
    </alternativeName>
    <alternativeName>
        <fullName>IGP synthase subunit hisF1</fullName>
    </alternativeName>
    <alternativeName>
        <fullName>ImGP synthase subunit hisF1</fullName>
        <shortName>IGPS subunit hisF1</shortName>
    </alternativeName>
</protein>
<keyword id="KW-0028">Amino-acid biosynthesis</keyword>
<keyword id="KW-0963">Cytoplasm</keyword>
<keyword id="KW-0368">Histidine biosynthesis</keyword>
<keyword id="KW-0456">Lyase</keyword>
<name>HIS61_VIBVY</name>
<evidence type="ECO:0000250" key="1"/>
<evidence type="ECO:0000255" key="2"/>
<evidence type="ECO:0000305" key="3"/>
<proteinExistence type="inferred from homology"/>
<comment type="function">
    <text evidence="1">IGPS catalyzes the conversion of PRFAR and glutamine to IGP, AICAR and glutamate. The HisF subunit catalyzes the cyclization activity that produces IGP and AICAR from PRFAR using the ammonia provided by the HisH subunit (By similarity).</text>
</comment>
<comment type="catalytic activity">
    <reaction>
        <text>5-[(5-phospho-1-deoxy-D-ribulos-1-ylimino)methylamino]-1-(5-phospho-beta-D-ribosyl)imidazole-4-carboxamide + L-glutamine = D-erythro-1-(imidazol-4-yl)glycerol 3-phosphate + 5-amino-1-(5-phospho-beta-D-ribosyl)imidazole-4-carboxamide + L-glutamate + H(+)</text>
        <dbReference type="Rhea" id="RHEA:24793"/>
        <dbReference type="ChEBI" id="CHEBI:15378"/>
        <dbReference type="ChEBI" id="CHEBI:29985"/>
        <dbReference type="ChEBI" id="CHEBI:58278"/>
        <dbReference type="ChEBI" id="CHEBI:58359"/>
        <dbReference type="ChEBI" id="CHEBI:58475"/>
        <dbReference type="ChEBI" id="CHEBI:58525"/>
        <dbReference type="EC" id="4.3.2.10"/>
    </reaction>
</comment>
<comment type="pathway">
    <text>Amino-acid biosynthesis; L-histidine biosynthesis; L-histidine from 5-phospho-alpha-D-ribose 1-diphosphate: step 5/9.</text>
</comment>
<comment type="subunit">
    <text evidence="1">Heterodimer of HisH and HisF.</text>
</comment>
<comment type="subcellular location">
    <subcellularLocation>
        <location evidence="1">Cytoplasm</location>
    </subcellularLocation>
</comment>
<comment type="similarity">
    <text evidence="3">Belongs to the HisA/HisF family.</text>
</comment>
<reference key="1">
    <citation type="journal article" date="2003" name="Genome Res.">
        <title>Comparative genome analysis of Vibrio vulnificus, a marine pathogen.</title>
        <authorList>
            <person name="Chen C.-Y."/>
            <person name="Wu K.-M."/>
            <person name="Chang Y.-C."/>
            <person name="Chang C.-H."/>
            <person name="Tsai H.-C."/>
            <person name="Liao T.-L."/>
            <person name="Liu Y.-M."/>
            <person name="Chen H.-J."/>
            <person name="Shen A.B.-T."/>
            <person name="Li J.-C."/>
            <person name="Su T.-L."/>
            <person name="Shao C.-P."/>
            <person name="Lee C.-T."/>
            <person name="Hor L.-I."/>
            <person name="Tsai S.-F."/>
        </authorList>
    </citation>
    <scope>NUCLEOTIDE SEQUENCE [LARGE SCALE GENOMIC DNA]</scope>
    <source>
        <strain>YJ016</strain>
    </source>
</reference>
<gene>
    <name type="primary">hisF1</name>
    <name type="ordered locus">VV1356</name>
</gene>
<sequence length="257" mass="28400">MLAKRIIPCLDVRDGQVVKGVQFRNHEIIGDIVPLAKRYAEEGADELVFYDITASSDGRVVDKSWVARVAEVIDIPFCVAGGIKSAEDAARILEFGADKVSINSPALANPQLITDLADKFGVQCIVVGIDSYYDKETGKYQVYQFTGDEERTKATQWETRDWVQEVQKRGAGEIVLNMMNQDGVRNGYDIEQLNMVREVCNVPLIASGGAGAMEHFAEAYQKANVDGALAASVFHKQVINIGELKQYLKQQGIEVRL</sequence>
<feature type="chain" id="PRO_0000142261" description="Imidazole glycerol phosphate synthase subunit hisF1">
    <location>
        <begin position="1"/>
        <end position="257"/>
    </location>
</feature>
<feature type="active site" evidence="2">
    <location>
        <position position="11"/>
    </location>
</feature>
<feature type="active site" evidence="2">
    <location>
        <position position="130"/>
    </location>
</feature>
<dbReference type="EC" id="4.3.2.10"/>
<dbReference type="EMBL" id="BA000037">
    <property type="protein sequence ID" value="BAC94120.1"/>
    <property type="molecule type" value="Genomic_DNA"/>
</dbReference>
<dbReference type="RefSeq" id="WP_011150023.1">
    <property type="nucleotide sequence ID" value="NC_005139.1"/>
</dbReference>
<dbReference type="SMR" id="Q7MLS1"/>
<dbReference type="STRING" id="672.VV93_v1c12690"/>
<dbReference type="KEGG" id="vvy:VV1356"/>
<dbReference type="PATRIC" id="fig|196600.6.peg.1345"/>
<dbReference type="eggNOG" id="COG0107">
    <property type="taxonomic scope" value="Bacteria"/>
</dbReference>
<dbReference type="HOGENOM" id="CLU_048577_4_0_6"/>
<dbReference type="UniPathway" id="UPA00031">
    <property type="reaction ID" value="UER00010"/>
</dbReference>
<dbReference type="Proteomes" id="UP000002675">
    <property type="component" value="Chromosome I"/>
</dbReference>
<dbReference type="GO" id="GO:0005737">
    <property type="term" value="C:cytoplasm"/>
    <property type="evidence" value="ECO:0007669"/>
    <property type="project" value="UniProtKB-SubCell"/>
</dbReference>
<dbReference type="GO" id="GO:0000107">
    <property type="term" value="F:imidazoleglycerol-phosphate synthase activity"/>
    <property type="evidence" value="ECO:0007669"/>
    <property type="project" value="UniProtKB-UniRule"/>
</dbReference>
<dbReference type="GO" id="GO:0016829">
    <property type="term" value="F:lyase activity"/>
    <property type="evidence" value="ECO:0007669"/>
    <property type="project" value="UniProtKB-KW"/>
</dbReference>
<dbReference type="GO" id="GO:0000105">
    <property type="term" value="P:L-histidine biosynthetic process"/>
    <property type="evidence" value="ECO:0007669"/>
    <property type="project" value="UniProtKB-UniRule"/>
</dbReference>
<dbReference type="CDD" id="cd04731">
    <property type="entry name" value="HisF"/>
    <property type="match status" value="1"/>
</dbReference>
<dbReference type="FunFam" id="3.20.20.70:FF:000006">
    <property type="entry name" value="Imidazole glycerol phosphate synthase subunit HisF"/>
    <property type="match status" value="1"/>
</dbReference>
<dbReference type="Gene3D" id="3.20.20.70">
    <property type="entry name" value="Aldolase class I"/>
    <property type="match status" value="1"/>
</dbReference>
<dbReference type="HAMAP" id="MF_01013">
    <property type="entry name" value="HisF"/>
    <property type="match status" value="1"/>
</dbReference>
<dbReference type="InterPro" id="IPR013785">
    <property type="entry name" value="Aldolase_TIM"/>
</dbReference>
<dbReference type="InterPro" id="IPR006062">
    <property type="entry name" value="His_biosynth"/>
</dbReference>
<dbReference type="InterPro" id="IPR004651">
    <property type="entry name" value="HisF"/>
</dbReference>
<dbReference type="InterPro" id="IPR050064">
    <property type="entry name" value="IGPS_HisA/HisF"/>
</dbReference>
<dbReference type="InterPro" id="IPR011060">
    <property type="entry name" value="RibuloseP-bd_barrel"/>
</dbReference>
<dbReference type="NCBIfam" id="TIGR00735">
    <property type="entry name" value="hisF"/>
    <property type="match status" value="1"/>
</dbReference>
<dbReference type="PANTHER" id="PTHR21235:SF2">
    <property type="entry name" value="IMIDAZOLE GLYCEROL PHOSPHATE SYNTHASE HISHF"/>
    <property type="match status" value="1"/>
</dbReference>
<dbReference type="PANTHER" id="PTHR21235">
    <property type="entry name" value="IMIDAZOLE GLYCEROL PHOSPHATE SYNTHASE SUBUNIT HISF/H IGP SYNTHASE SUBUNIT HISF/H"/>
    <property type="match status" value="1"/>
</dbReference>
<dbReference type="Pfam" id="PF00977">
    <property type="entry name" value="His_biosynth"/>
    <property type="match status" value="1"/>
</dbReference>
<dbReference type="SUPFAM" id="SSF51366">
    <property type="entry name" value="Ribulose-phoshate binding barrel"/>
    <property type="match status" value="1"/>
</dbReference>